<accession>Q5JF09</accession>
<reference key="1">
    <citation type="journal article" date="2005" name="Genome Res.">
        <title>Complete genome sequence of the hyperthermophilic archaeon Thermococcus kodakaraensis KOD1 and comparison with Pyrococcus genomes.</title>
        <authorList>
            <person name="Fukui T."/>
            <person name="Atomi H."/>
            <person name="Kanai T."/>
            <person name="Matsumi R."/>
            <person name="Fujiwara S."/>
            <person name="Imanaka T."/>
        </authorList>
    </citation>
    <scope>NUCLEOTIDE SEQUENCE [LARGE SCALE GENOMIC DNA]</scope>
    <source>
        <strain>ATCC BAA-918 / JCM 12380 / KOD1</strain>
    </source>
</reference>
<organism>
    <name type="scientific">Thermococcus kodakarensis (strain ATCC BAA-918 / JCM 12380 / KOD1)</name>
    <name type="common">Pyrococcus kodakaraensis (strain KOD1)</name>
    <dbReference type="NCBI Taxonomy" id="69014"/>
    <lineage>
        <taxon>Archaea</taxon>
        <taxon>Methanobacteriati</taxon>
        <taxon>Methanobacteriota</taxon>
        <taxon>Thermococci</taxon>
        <taxon>Thermococcales</taxon>
        <taxon>Thermococcaceae</taxon>
        <taxon>Thermococcus</taxon>
    </lineage>
</organism>
<protein>
    <recommendedName>
        <fullName>Superoxide reductase</fullName>
        <shortName>SOR</shortName>
        <ecNumber>1.15.1.2</ecNumber>
    </recommendedName>
</protein>
<gene>
    <name type="primary">sorA</name>
    <name type="ordered locus">TK0525</name>
</gene>
<sequence>MLSQTIKSGDWKGEKHVPVIEYEKEGDLVKVEVSVGKEIPHPNTPEHHIAWIQLWFHPEDGAFPILVGKVEFSNHTDPLTEPRAVFFFRTQKKGKLYALSYCNIHGLWENEVTLE</sequence>
<feature type="chain" id="PRO_0000140875" description="Superoxide reductase">
    <location>
        <begin position="1"/>
        <end position="115"/>
    </location>
</feature>
<feature type="binding site" evidence="1">
    <location>
        <position position="14"/>
    </location>
    <ligand>
        <name>Fe cation</name>
        <dbReference type="ChEBI" id="CHEBI:24875"/>
    </ligand>
</feature>
<feature type="binding site" evidence="1">
    <location>
        <position position="16"/>
    </location>
    <ligand>
        <name>Fe cation</name>
        <dbReference type="ChEBI" id="CHEBI:24875"/>
    </ligand>
</feature>
<feature type="binding site" evidence="1">
    <location>
        <position position="41"/>
    </location>
    <ligand>
        <name>Fe cation</name>
        <dbReference type="ChEBI" id="CHEBI:24875"/>
    </ligand>
</feature>
<feature type="binding site" evidence="1">
    <location>
        <position position="47"/>
    </location>
    <ligand>
        <name>Fe cation</name>
        <dbReference type="ChEBI" id="CHEBI:24875"/>
    </ligand>
</feature>
<feature type="binding site" evidence="1">
    <location>
        <position position="102"/>
    </location>
    <ligand>
        <name>Fe cation</name>
        <dbReference type="ChEBI" id="CHEBI:24875"/>
    </ligand>
</feature>
<feature type="binding site" evidence="1">
    <location>
        <position position="105"/>
    </location>
    <ligand>
        <name>Fe cation</name>
        <dbReference type="ChEBI" id="CHEBI:24875"/>
    </ligand>
</feature>
<proteinExistence type="inferred from homology"/>
<evidence type="ECO:0000250" key="1"/>
<evidence type="ECO:0000250" key="2">
    <source>
        <dbReference type="UniProtKB" id="P82385"/>
    </source>
</evidence>
<evidence type="ECO:0000305" key="3"/>
<keyword id="KW-0249">Electron transport</keyword>
<keyword id="KW-0408">Iron</keyword>
<keyword id="KW-0479">Metal-binding</keyword>
<keyword id="KW-0560">Oxidoreductase</keyword>
<keyword id="KW-1185">Reference proteome</keyword>
<keyword id="KW-0813">Transport</keyword>
<name>SOR_THEKO</name>
<comment type="function">
    <text evidence="1">Uses electrons from reduced NADP, by way of rubredoxin and an oxidoreductase, to catalyze the reduction of superoxide to hydrogen peroxide.</text>
</comment>
<comment type="catalytic activity">
    <reaction evidence="2">
        <text>reduced [rubredoxin] + superoxide + 2 H(+) = oxidized [rubredoxin] + H2O2</text>
        <dbReference type="Rhea" id="RHEA:21324"/>
        <dbReference type="Rhea" id="RHEA-COMP:10302"/>
        <dbReference type="Rhea" id="RHEA-COMP:10303"/>
        <dbReference type="ChEBI" id="CHEBI:15378"/>
        <dbReference type="ChEBI" id="CHEBI:16240"/>
        <dbReference type="ChEBI" id="CHEBI:18421"/>
        <dbReference type="ChEBI" id="CHEBI:29033"/>
        <dbReference type="ChEBI" id="CHEBI:29034"/>
        <dbReference type="EC" id="1.15.1.2"/>
    </reaction>
</comment>
<comment type="cofactor">
    <cofactor evidence="1">
        <name>Fe cation</name>
        <dbReference type="ChEBI" id="CHEBI:24875"/>
    </cofactor>
</comment>
<comment type="subunit">
    <text evidence="1">Homotetramer.</text>
</comment>
<comment type="similarity">
    <text evidence="3">Belongs to the desulfoferrodoxin family.</text>
</comment>
<dbReference type="EC" id="1.15.1.2"/>
<dbReference type="EMBL" id="AP006878">
    <property type="protein sequence ID" value="BAD84714.1"/>
    <property type="molecule type" value="Genomic_DNA"/>
</dbReference>
<dbReference type="RefSeq" id="WP_011249480.1">
    <property type="nucleotide sequence ID" value="NC_006624.1"/>
</dbReference>
<dbReference type="SMR" id="Q5JF09"/>
<dbReference type="STRING" id="69014.TK0525"/>
<dbReference type="EnsemblBacteria" id="BAD84714">
    <property type="protein sequence ID" value="BAD84714"/>
    <property type="gene ID" value="TK0525"/>
</dbReference>
<dbReference type="GeneID" id="78447038"/>
<dbReference type="KEGG" id="tko:TK0525"/>
<dbReference type="PATRIC" id="fig|69014.16.peg.515"/>
<dbReference type="eggNOG" id="arCOG02146">
    <property type="taxonomic scope" value="Archaea"/>
</dbReference>
<dbReference type="HOGENOM" id="CLU_118960_2_1_2"/>
<dbReference type="InParanoid" id="Q5JF09"/>
<dbReference type="OrthoDB" id="30725at2157"/>
<dbReference type="PhylomeDB" id="Q5JF09"/>
<dbReference type="Proteomes" id="UP000000536">
    <property type="component" value="Chromosome"/>
</dbReference>
<dbReference type="GO" id="GO:0005506">
    <property type="term" value="F:iron ion binding"/>
    <property type="evidence" value="ECO:0007669"/>
    <property type="project" value="InterPro"/>
</dbReference>
<dbReference type="GO" id="GO:0050605">
    <property type="term" value="F:superoxide reductase activity"/>
    <property type="evidence" value="ECO:0007669"/>
    <property type="project" value="UniProtKB-EC"/>
</dbReference>
<dbReference type="CDD" id="cd03172">
    <property type="entry name" value="SORL_classII"/>
    <property type="match status" value="1"/>
</dbReference>
<dbReference type="Gene3D" id="2.60.40.730">
    <property type="entry name" value="SOR catalytic domain"/>
    <property type="match status" value="1"/>
</dbReference>
<dbReference type="InterPro" id="IPR002742">
    <property type="entry name" value="Desulfoferrodoxin_Fe-bd_dom"/>
</dbReference>
<dbReference type="InterPro" id="IPR036073">
    <property type="entry name" value="Desulfoferrodoxin_Fe-bd_dom_sf"/>
</dbReference>
<dbReference type="InterPro" id="IPR051233">
    <property type="entry name" value="Desulfoferrodoxin_SOR"/>
</dbReference>
<dbReference type="NCBIfam" id="TIGR00332">
    <property type="entry name" value="neela_ferrous"/>
    <property type="match status" value="1"/>
</dbReference>
<dbReference type="PANTHER" id="PTHR36541">
    <property type="entry name" value="SUPEROXIDE REDUCTASE-RELATED"/>
    <property type="match status" value="1"/>
</dbReference>
<dbReference type="PANTHER" id="PTHR36541:SF1">
    <property type="entry name" value="SUPEROXIDE REDUCTASE-RELATED"/>
    <property type="match status" value="1"/>
</dbReference>
<dbReference type="Pfam" id="PF01880">
    <property type="entry name" value="Desulfoferrodox"/>
    <property type="match status" value="1"/>
</dbReference>
<dbReference type="SUPFAM" id="SSF49367">
    <property type="entry name" value="Superoxide reductase-like"/>
    <property type="match status" value="1"/>
</dbReference>